<gene>
    <name type="primary">Cyp4s3</name>
    <name type="ORF">CG9081</name>
</gene>
<name>CP4S3_DROME</name>
<accession>Q9VXY0</accession>
<keyword id="KW-0256">Endoplasmic reticulum</keyword>
<keyword id="KW-0349">Heme</keyword>
<keyword id="KW-0408">Iron</keyword>
<keyword id="KW-0472">Membrane</keyword>
<keyword id="KW-0479">Metal-binding</keyword>
<keyword id="KW-0492">Microsome</keyword>
<keyword id="KW-0503">Monooxygenase</keyword>
<keyword id="KW-0560">Oxidoreductase</keyword>
<keyword id="KW-1185">Reference proteome</keyword>
<organism>
    <name type="scientific">Drosophila melanogaster</name>
    <name type="common">Fruit fly</name>
    <dbReference type="NCBI Taxonomy" id="7227"/>
    <lineage>
        <taxon>Eukaryota</taxon>
        <taxon>Metazoa</taxon>
        <taxon>Ecdysozoa</taxon>
        <taxon>Arthropoda</taxon>
        <taxon>Hexapoda</taxon>
        <taxon>Insecta</taxon>
        <taxon>Pterygota</taxon>
        <taxon>Neoptera</taxon>
        <taxon>Endopterygota</taxon>
        <taxon>Diptera</taxon>
        <taxon>Brachycera</taxon>
        <taxon>Muscomorpha</taxon>
        <taxon>Ephydroidea</taxon>
        <taxon>Drosophilidae</taxon>
        <taxon>Drosophila</taxon>
        <taxon>Sophophora</taxon>
    </lineage>
</organism>
<feature type="chain" id="PRO_0000051848" description="Probable cytochrome P450 4s3">
    <location>
        <begin position="1"/>
        <end position="495"/>
    </location>
</feature>
<feature type="binding site" description="covalent" evidence="1">
    <location>
        <position position="307"/>
    </location>
    <ligand>
        <name>heme</name>
        <dbReference type="ChEBI" id="CHEBI:30413"/>
    </ligand>
</feature>
<feature type="binding site" description="axial binding residue" evidence="1">
    <location>
        <position position="436"/>
    </location>
    <ligand>
        <name>heme</name>
        <dbReference type="ChEBI" id="CHEBI:30413"/>
    </ligand>
    <ligandPart>
        <name>Fe</name>
        <dbReference type="ChEBI" id="CHEBI:18248"/>
    </ligandPart>
</feature>
<evidence type="ECO:0000250" key="1"/>
<evidence type="ECO:0000305" key="2"/>
<dbReference type="EC" id="1.14.-.-"/>
<dbReference type="EMBL" id="AE014298">
    <property type="protein sequence ID" value="AAF48426.1"/>
    <property type="molecule type" value="Genomic_DNA"/>
</dbReference>
<dbReference type="RefSeq" id="NP_573003.2">
    <property type="nucleotide sequence ID" value="NM_132775.3"/>
</dbReference>
<dbReference type="SMR" id="Q9VXY0"/>
<dbReference type="BioGRID" id="58799">
    <property type="interactions" value="1"/>
</dbReference>
<dbReference type="DIP" id="DIP-19604N"/>
<dbReference type="FunCoup" id="Q9VXY0">
    <property type="interactions" value="6"/>
</dbReference>
<dbReference type="IntAct" id="Q9VXY0">
    <property type="interactions" value="2"/>
</dbReference>
<dbReference type="STRING" id="7227.FBpp0073845"/>
<dbReference type="GlyGen" id="Q9VXY0">
    <property type="glycosylation" value="1 site"/>
</dbReference>
<dbReference type="PaxDb" id="7227-FBpp0073845"/>
<dbReference type="DNASU" id="32444"/>
<dbReference type="EnsemblMetazoa" id="FBtr0074028">
    <property type="protein sequence ID" value="FBpp0073845"/>
    <property type="gene ID" value="FBgn0030615"/>
</dbReference>
<dbReference type="GeneID" id="32444"/>
<dbReference type="KEGG" id="dme:Dmel_CG9081"/>
<dbReference type="UCSC" id="CG9081-RA">
    <property type="organism name" value="d. melanogaster"/>
</dbReference>
<dbReference type="AGR" id="FB:FBgn0030615"/>
<dbReference type="CTD" id="32444"/>
<dbReference type="FlyBase" id="FBgn0030615">
    <property type="gene designation" value="Cyp4s3"/>
</dbReference>
<dbReference type="VEuPathDB" id="VectorBase:FBgn0030615"/>
<dbReference type="eggNOG" id="KOG0157">
    <property type="taxonomic scope" value="Eukaryota"/>
</dbReference>
<dbReference type="GeneTree" id="ENSGT00940000166362"/>
<dbReference type="HOGENOM" id="CLU_001570_5_1_1"/>
<dbReference type="InParanoid" id="Q9VXY0"/>
<dbReference type="OMA" id="FFGSRWN"/>
<dbReference type="OrthoDB" id="1470350at2759"/>
<dbReference type="PhylomeDB" id="Q9VXY0"/>
<dbReference type="Reactome" id="R-DME-193144">
    <property type="pathway name" value="Estrogen biosynthesis"/>
</dbReference>
<dbReference type="Reactome" id="R-DME-211976">
    <property type="pathway name" value="Endogenous sterols"/>
</dbReference>
<dbReference type="BioGRID-ORCS" id="32444">
    <property type="hits" value="0 hits in 3 CRISPR screens"/>
</dbReference>
<dbReference type="GenomeRNAi" id="32444"/>
<dbReference type="PRO" id="PR:Q9VXY0"/>
<dbReference type="Proteomes" id="UP000000803">
    <property type="component" value="Chromosome X"/>
</dbReference>
<dbReference type="Bgee" id="FBgn0030615">
    <property type="expression patterns" value="Expressed in nurse follicle cell (Drosophila) in ovary and 24 other cell types or tissues"/>
</dbReference>
<dbReference type="ExpressionAtlas" id="Q9VXY0">
    <property type="expression patterns" value="baseline and differential"/>
</dbReference>
<dbReference type="GO" id="GO:0005789">
    <property type="term" value="C:endoplasmic reticulum membrane"/>
    <property type="evidence" value="ECO:0007669"/>
    <property type="project" value="UniProtKB-SubCell"/>
</dbReference>
<dbReference type="GO" id="GO:0020037">
    <property type="term" value="F:heme binding"/>
    <property type="evidence" value="ECO:0007669"/>
    <property type="project" value="InterPro"/>
</dbReference>
<dbReference type="GO" id="GO:0005506">
    <property type="term" value="F:iron ion binding"/>
    <property type="evidence" value="ECO:0007669"/>
    <property type="project" value="InterPro"/>
</dbReference>
<dbReference type="GO" id="GO:0004497">
    <property type="term" value="F:monooxygenase activity"/>
    <property type="evidence" value="ECO:0007669"/>
    <property type="project" value="UniProtKB-KW"/>
</dbReference>
<dbReference type="GO" id="GO:0016705">
    <property type="term" value="F:oxidoreductase activity, acting on paired donors, with incorporation or reduction of molecular oxygen"/>
    <property type="evidence" value="ECO:0007669"/>
    <property type="project" value="InterPro"/>
</dbReference>
<dbReference type="CDD" id="cd20628">
    <property type="entry name" value="CYP4"/>
    <property type="match status" value="1"/>
</dbReference>
<dbReference type="Gene3D" id="1.10.630.10">
    <property type="entry name" value="Cytochrome P450"/>
    <property type="match status" value="1"/>
</dbReference>
<dbReference type="InterPro" id="IPR001128">
    <property type="entry name" value="Cyt_P450"/>
</dbReference>
<dbReference type="InterPro" id="IPR017972">
    <property type="entry name" value="Cyt_P450_CS"/>
</dbReference>
<dbReference type="InterPro" id="IPR002401">
    <property type="entry name" value="Cyt_P450_E_grp-I"/>
</dbReference>
<dbReference type="InterPro" id="IPR036396">
    <property type="entry name" value="Cyt_P450_sf"/>
</dbReference>
<dbReference type="InterPro" id="IPR050196">
    <property type="entry name" value="Cytochrome_P450_Monoox"/>
</dbReference>
<dbReference type="PANTHER" id="PTHR24291:SF203">
    <property type="entry name" value="CYTOCHROME P450 4D1-RELATED"/>
    <property type="match status" value="1"/>
</dbReference>
<dbReference type="PANTHER" id="PTHR24291">
    <property type="entry name" value="CYTOCHROME P450 FAMILY 4"/>
    <property type="match status" value="1"/>
</dbReference>
<dbReference type="Pfam" id="PF00067">
    <property type="entry name" value="p450"/>
    <property type="match status" value="1"/>
</dbReference>
<dbReference type="PRINTS" id="PR00463">
    <property type="entry name" value="EP450I"/>
</dbReference>
<dbReference type="PRINTS" id="PR00385">
    <property type="entry name" value="P450"/>
</dbReference>
<dbReference type="SUPFAM" id="SSF48264">
    <property type="entry name" value="Cytochrome P450"/>
    <property type="match status" value="1"/>
</dbReference>
<dbReference type="PROSITE" id="PS00086">
    <property type="entry name" value="CYTOCHROME_P450"/>
    <property type="match status" value="1"/>
</dbReference>
<reference key="1">
    <citation type="journal article" date="2000" name="Science">
        <title>The genome sequence of Drosophila melanogaster.</title>
        <authorList>
            <person name="Adams M.D."/>
            <person name="Celniker S.E."/>
            <person name="Holt R.A."/>
            <person name="Evans C.A."/>
            <person name="Gocayne J.D."/>
            <person name="Amanatides P.G."/>
            <person name="Scherer S.E."/>
            <person name="Li P.W."/>
            <person name="Hoskins R.A."/>
            <person name="Galle R.F."/>
            <person name="George R.A."/>
            <person name="Lewis S.E."/>
            <person name="Richards S."/>
            <person name="Ashburner M."/>
            <person name="Henderson S.N."/>
            <person name="Sutton G.G."/>
            <person name="Wortman J.R."/>
            <person name="Yandell M.D."/>
            <person name="Zhang Q."/>
            <person name="Chen L.X."/>
            <person name="Brandon R.C."/>
            <person name="Rogers Y.-H.C."/>
            <person name="Blazej R.G."/>
            <person name="Champe M."/>
            <person name="Pfeiffer B.D."/>
            <person name="Wan K.H."/>
            <person name="Doyle C."/>
            <person name="Baxter E.G."/>
            <person name="Helt G."/>
            <person name="Nelson C.R."/>
            <person name="Miklos G.L.G."/>
            <person name="Abril J.F."/>
            <person name="Agbayani A."/>
            <person name="An H.-J."/>
            <person name="Andrews-Pfannkoch C."/>
            <person name="Baldwin D."/>
            <person name="Ballew R.M."/>
            <person name="Basu A."/>
            <person name="Baxendale J."/>
            <person name="Bayraktaroglu L."/>
            <person name="Beasley E.M."/>
            <person name="Beeson K.Y."/>
            <person name="Benos P.V."/>
            <person name="Berman B.P."/>
            <person name="Bhandari D."/>
            <person name="Bolshakov S."/>
            <person name="Borkova D."/>
            <person name="Botchan M.R."/>
            <person name="Bouck J."/>
            <person name="Brokstein P."/>
            <person name="Brottier P."/>
            <person name="Burtis K.C."/>
            <person name="Busam D.A."/>
            <person name="Butler H."/>
            <person name="Cadieu E."/>
            <person name="Center A."/>
            <person name="Chandra I."/>
            <person name="Cherry J.M."/>
            <person name="Cawley S."/>
            <person name="Dahlke C."/>
            <person name="Davenport L.B."/>
            <person name="Davies P."/>
            <person name="de Pablos B."/>
            <person name="Delcher A."/>
            <person name="Deng Z."/>
            <person name="Mays A.D."/>
            <person name="Dew I."/>
            <person name="Dietz S.M."/>
            <person name="Dodson K."/>
            <person name="Doup L.E."/>
            <person name="Downes M."/>
            <person name="Dugan-Rocha S."/>
            <person name="Dunkov B.C."/>
            <person name="Dunn P."/>
            <person name="Durbin K.J."/>
            <person name="Evangelista C.C."/>
            <person name="Ferraz C."/>
            <person name="Ferriera S."/>
            <person name="Fleischmann W."/>
            <person name="Fosler C."/>
            <person name="Gabrielian A.E."/>
            <person name="Garg N.S."/>
            <person name="Gelbart W.M."/>
            <person name="Glasser K."/>
            <person name="Glodek A."/>
            <person name="Gong F."/>
            <person name="Gorrell J.H."/>
            <person name="Gu Z."/>
            <person name="Guan P."/>
            <person name="Harris M."/>
            <person name="Harris N.L."/>
            <person name="Harvey D.A."/>
            <person name="Heiman T.J."/>
            <person name="Hernandez J.R."/>
            <person name="Houck J."/>
            <person name="Hostin D."/>
            <person name="Houston K.A."/>
            <person name="Howland T.J."/>
            <person name="Wei M.-H."/>
            <person name="Ibegwam C."/>
            <person name="Jalali M."/>
            <person name="Kalush F."/>
            <person name="Karpen G.H."/>
            <person name="Ke Z."/>
            <person name="Kennison J.A."/>
            <person name="Ketchum K.A."/>
            <person name="Kimmel B.E."/>
            <person name="Kodira C.D."/>
            <person name="Kraft C.L."/>
            <person name="Kravitz S."/>
            <person name="Kulp D."/>
            <person name="Lai Z."/>
            <person name="Lasko P."/>
            <person name="Lei Y."/>
            <person name="Levitsky A.A."/>
            <person name="Li J.H."/>
            <person name="Li Z."/>
            <person name="Liang Y."/>
            <person name="Lin X."/>
            <person name="Liu X."/>
            <person name="Mattei B."/>
            <person name="McIntosh T.C."/>
            <person name="McLeod M.P."/>
            <person name="McPherson D."/>
            <person name="Merkulov G."/>
            <person name="Milshina N.V."/>
            <person name="Mobarry C."/>
            <person name="Morris J."/>
            <person name="Moshrefi A."/>
            <person name="Mount S.M."/>
            <person name="Moy M."/>
            <person name="Murphy B."/>
            <person name="Murphy L."/>
            <person name="Muzny D.M."/>
            <person name="Nelson D.L."/>
            <person name="Nelson D.R."/>
            <person name="Nelson K.A."/>
            <person name="Nixon K."/>
            <person name="Nusskern D.R."/>
            <person name="Pacleb J.M."/>
            <person name="Palazzolo M."/>
            <person name="Pittman G.S."/>
            <person name="Pan S."/>
            <person name="Pollard J."/>
            <person name="Puri V."/>
            <person name="Reese M.G."/>
            <person name="Reinert K."/>
            <person name="Remington K."/>
            <person name="Saunders R.D.C."/>
            <person name="Scheeler F."/>
            <person name="Shen H."/>
            <person name="Shue B.C."/>
            <person name="Siden-Kiamos I."/>
            <person name="Simpson M."/>
            <person name="Skupski M.P."/>
            <person name="Smith T.J."/>
            <person name="Spier E."/>
            <person name="Spradling A.C."/>
            <person name="Stapleton M."/>
            <person name="Strong R."/>
            <person name="Sun E."/>
            <person name="Svirskas R."/>
            <person name="Tector C."/>
            <person name="Turner R."/>
            <person name="Venter E."/>
            <person name="Wang A.H."/>
            <person name="Wang X."/>
            <person name="Wang Z.-Y."/>
            <person name="Wassarman D.A."/>
            <person name="Weinstock G.M."/>
            <person name="Weissenbach J."/>
            <person name="Williams S.M."/>
            <person name="Woodage T."/>
            <person name="Worley K.C."/>
            <person name="Wu D."/>
            <person name="Yang S."/>
            <person name="Yao Q.A."/>
            <person name="Ye J."/>
            <person name="Yeh R.-F."/>
            <person name="Zaveri J.S."/>
            <person name="Zhan M."/>
            <person name="Zhang G."/>
            <person name="Zhao Q."/>
            <person name="Zheng L."/>
            <person name="Zheng X.H."/>
            <person name="Zhong F.N."/>
            <person name="Zhong W."/>
            <person name="Zhou X."/>
            <person name="Zhu S.C."/>
            <person name="Zhu X."/>
            <person name="Smith H.O."/>
            <person name="Gibbs R.A."/>
            <person name="Myers E.W."/>
            <person name="Rubin G.M."/>
            <person name="Venter J.C."/>
        </authorList>
    </citation>
    <scope>NUCLEOTIDE SEQUENCE [LARGE SCALE GENOMIC DNA]</scope>
    <source>
        <strain>Berkeley</strain>
    </source>
</reference>
<reference key="2">
    <citation type="journal article" date="2002" name="Genome Biol.">
        <title>Annotation of the Drosophila melanogaster euchromatic genome: a systematic review.</title>
        <authorList>
            <person name="Misra S."/>
            <person name="Crosby M.A."/>
            <person name="Mungall C.J."/>
            <person name="Matthews B.B."/>
            <person name="Campbell K.S."/>
            <person name="Hradecky P."/>
            <person name="Huang Y."/>
            <person name="Kaminker J.S."/>
            <person name="Millburn G.H."/>
            <person name="Prochnik S.E."/>
            <person name="Smith C.D."/>
            <person name="Tupy J.L."/>
            <person name="Whitfield E.J."/>
            <person name="Bayraktaroglu L."/>
            <person name="Berman B.P."/>
            <person name="Bettencourt B.R."/>
            <person name="Celniker S.E."/>
            <person name="de Grey A.D.N.J."/>
            <person name="Drysdale R.A."/>
            <person name="Harris N.L."/>
            <person name="Richter J."/>
            <person name="Russo S."/>
            <person name="Schroeder A.J."/>
            <person name="Shu S.Q."/>
            <person name="Stapleton M."/>
            <person name="Yamada C."/>
            <person name="Ashburner M."/>
            <person name="Gelbart W.M."/>
            <person name="Rubin G.M."/>
            <person name="Lewis S.E."/>
        </authorList>
    </citation>
    <scope>GENOME REANNOTATION</scope>
    <source>
        <strain>Berkeley</strain>
    </source>
</reference>
<protein>
    <recommendedName>
        <fullName>Probable cytochrome P450 4s3</fullName>
        <ecNumber>1.14.-.-</ecNumber>
    </recommendedName>
    <alternativeName>
        <fullName>CYPIVS3</fullName>
    </alternativeName>
</protein>
<comment type="function">
    <text evidence="1">May be involved in the metabolism of insect hormones and in the breakdown of synthetic insecticides.</text>
</comment>
<comment type="cofactor">
    <cofactor evidence="1">
        <name>heme</name>
        <dbReference type="ChEBI" id="CHEBI:30413"/>
    </cofactor>
</comment>
<comment type="subcellular location">
    <subcellularLocation>
        <location evidence="2">Endoplasmic reticulum membrane</location>
        <topology evidence="2">Peripheral membrane protein</topology>
    </subcellularLocation>
    <subcellularLocation>
        <location evidence="2">Microsome membrane</location>
        <topology evidence="2">Peripheral membrane protein</topology>
    </subcellularLocation>
</comment>
<comment type="similarity">
    <text evidence="2">Belongs to the cytochrome P450 family.</text>
</comment>
<proteinExistence type="inferred from homology"/>
<sequence length="495" mass="57189">MSTLALVAFVLWAAFLRYLPKILNFLRLQRFAKTLPGPTIGELIANVKKGEILNWLKELREKHGPVFRIWFGKDLMVMFTDPEDIKQLLGNNQLLTKSRNYELLEPWLGKGLLTNGGESWHRRRKLLTPGFHFRILSEFKEPMEENCRILVRRLRTKANGESFDIYPYITLFALDAICETAMGIKKHAQLQSDSEYVQAVQSICRVMHKQSFSFWQRLNVFFKHTKPGKEREAALKVLHDETNRVIRLRREQLIQERNEWKPEAEQDDVGAKRRLAFLDMLLLTQMEGGAELSDTDIREEVDTFMFEGHDTTSSAIAFALSLLSKNPDVQQRAFEEASELEGREKESMPYLEAVIKETLRIYPSVPFFSRKVLEDLEVGKLTVPKGASISCLIYMLHRDPKNFPDPERFDPDRFLVNEKQMHPFAFAAFSAGPRNCIGQKFAMLELKTSLAMLLRSYRFLPDKDHQPKPLAELVTKSGNGIRLRILPRDENGTTA</sequence>